<organism>
    <name type="scientific">Mus musculus</name>
    <name type="common">Mouse</name>
    <dbReference type="NCBI Taxonomy" id="10090"/>
    <lineage>
        <taxon>Eukaryota</taxon>
        <taxon>Metazoa</taxon>
        <taxon>Chordata</taxon>
        <taxon>Craniata</taxon>
        <taxon>Vertebrata</taxon>
        <taxon>Euteleostomi</taxon>
        <taxon>Mammalia</taxon>
        <taxon>Eutheria</taxon>
        <taxon>Euarchontoglires</taxon>
        <taxon>Glires</taxon>
        <taxon>Rodentia</taxon>
        <taxon>Myomorpha</taxon>
        <taxon>Muroidea</taxon>
        <taxon>Muridae</taxon>
        <taxon>Murinae</taxon>
        <taxon>Mus</taxon>
        <taxon>Mus</taxon>
    </lineage>
</organism>
<feature type="chain" id="PRO_0000186209" description="BTB/POZ domain-containing protein 1">
    <location>
        <begin position="1"/>
        <end position="488"/>
    </location>
</feature>
<feature type="domain" description="BTB" evidence="3">
    <location>
        <begin position="75"/>
        <end position="151"/>
    </location>
</feature>
<feature type="domain" description="BACK" evidence="2">
    <location>
        <begin position="190"/>
        <end position="290"/>
    </location>
</feature>
<feature type="region of interest" description="Disordered" evidence="4">
    <location>
        <begin position="1"/>
        <end position="42"/>
    </location>
</feature>
<feature type="compositionally biased region" description="Low complexity" evidence="4">
    <location>
        <begin position="1"/>
        <end position="19"/>
    </location>
</feature>
<feature type="compositionally biased region" description="Pro residues" evidence="4">
    <location>
        <begin position="20"/>
        <end position="36"/>
    </location>
</feature>
<feature type="modified residue" description="Omega-N-methylarginine" evidence="1">
    <location>
        <position position="85"/>
    </location>
</feature>
<feature type="mutagenesis site" description="Fails to induce myogenic differentiation in C2C12 cells." evidence="5">
    <location>
        <begin position="1"/>
        <end position="108"/>
    </location>
</feature>
<feature type="sequence conflict" description="In Ref. 1; BAC40296." evidence="7" ref="1">
    <original>G</original>
    <variation>R</variation>
    <location>
        <position position="21"/>
    </location>
</feature>
<feature type="sequence conflict" description="In Ref. 1; BAC40296." evidence="7" ref="1">
    <original>H</original>
    <variation>P</variation>
    <location>
        <position position="99"/>
    </location>
</feature>
<proteinExistence type="evidence at protein level"/>
<sequence>MASLGSAAAGEPATGAEAEPGPPAPPPPPPPPPAPSPSALGPLLPLQREPLYNWQATKASLKERFAFLFNSELLSDVRFVLGKGRGAAAAGGPQRIPAHRFVLAAGSAVFDAMFNGGMATTSAEIELPDVEPAAFLALLRFLYSDEVQIGPETVMTTLYTAKKYAVPALEAHCVEFLTKHLRADNAFMLLTQARLFDEPQLASLCLDTIDKSTVDAISAEGFTDIDIDTLCAVLERDTLSIRESRLFGAIVRWAEAECQRQQLAVTFGNKQKVLGKALSLIRFPLMTIEEFAAGPAQSGILSDREVVNLFLHFTVNPKPRVEYIDRPRCCLRGKECCINRFQQVESRWGYSGTSDRIRFTVNRRISVVGFGLYGSIHGPTDYQVNIQIIEYEKKQTLGQNDTGFSCDGTANTFRVMFKEPIEILPNVCYTACATLKGPDSHYGTKGLKKVVHETPAASKTVFLFFSSPGNNNGTSIEDGQIPEIIFYT</sequence>
<protein>
    <recommendedName>
        <fullName>BTB/POZ domain-containing protein 1</fullName>
    </recommendedName>
    <alternativeName>
        <fullName>Glucose signal-repressing protein</fullName>
    </alternativeName>
</protein>
<gene>
    <name type="primary">Btbd1</name>
    <name type="synonym">Gsrp</name>
</gene>
<accession>P58544</accession>
<accession>Q6GQU7</accession>
<accession>Q8BTZ0</accession>
<accession>Q8K0J0</accession>
<dbReference type="EMBL" id="AK088345">
    <property type="protein sequence ID" value="BAC40296.1"/>
    <property type="molecule type" value="mRNA"/>
</dbReference>
<dbReference type="EMBL" id="BC031192">
    <property type="protein sequence ID" value="AAH31192.1"/>
    <property type="status" value="ALT_INIT"/>
    <property type="molecule type" value="mRNA"/>
</dbReference>
<dbReference type="EMBL" id="BC072618">
    <property type="protein sequence ID" value="AAH72618.1"/>
    <property type="molecule type" value="mRNA"/>
</dbReference>
<dbReference type="CCDS" id="CCDS21407.1"/>
<dbReference type="RefSeq" id="NP_666305.2">
    <property type="nucleotide sequence ID" value="NM_146193.2"/>
</dbReference>
<dbReference type="SMR" id="P58544"/>
<dbReference type="BioGRID" id="219989">
    <property type="interactions" value="3"/>
</dbReference>
<dbReference type="FunCoup" id="P58544">
    <property type="interactions" value="2037"/>
</dbReference>
<dbReference type="IntAct" id="P58544">
    <property type="interactions" value="1"/>
</dbReference>
<dbReference type="MINT" id="P58544"/>
<dbReference type="STRING" id="10090.ENSMUSP00000026093"/>
<dbReference type="iPTMnet" id="P58544"/>
<dbReference type="PhosphoSitePlus" id="P58544"/>
<dbReference type="PaxDb" id="10090-ENSMUSP00000026093"/>
<dbReference type="PeptideAtlas" id="P58544"/>
<dbReference type="ProteomicsDB" id="273849"/>
<dbReference type="Pumba" id="P58544"/>
<dbReference type="Antibodypedia" id="28167">
    <property type="antibodies" value="181 antibodies from 27 providers"/>
</dbReference>
<dbReference type="DNASU" id="83962"/>
<dbReference type="Ensembl" id="ENSMUST00000026093.9">
    <property type="protein sequence ID" value="ENSMUSP00000026093.8"/>
    <property type="gene ID" value="ENSMUSG00000025103.9"/>
</dbReference>
<dbReference type="GeneID" id="83962"/>
<dbReference type="KEGG" id="mmu:83962"/>
<dbReference type="UCSC" id="uc009icn.1">
    <property type="organism name" value="mouse"/>
</dbReference>
<dbReference type="AGR" id="MGI:1933765"/>
<dbReference type="CTD" id="53339"/>
<dbReference type="MGI" id="MGI:1933765">
    <property type="gene designation" value="Btbd1"/>
</dbReference>
<dbReference type="VEuPathDB" id="HostDB:ENSMUSG00000025103"/>
<dbReference type="eggNOG" id="KOG2075">
    <property type="taxonomic scope" value="Eukaryota"/>
</dbReference>
<dbReference type="GeneTree" id="ENSGT00940000156756"/>
<dbReference type="HOGENOM" id="CLU_015899_2_1_1"/>
<dbReference type="InParanoid" id="P58544"/>
<dbReference type="OMA" id="CYMACAT"/>
<dbReference type="OrthoDB" id="636773at2759"/>
<dbReference type="PhylomeDB" id="P58544"/>
<dbReference type="TreeFam" id="TF106482"/>
<dbReference type="Reactome" id="R-MMU-8951664">
    <property type="pathway name" value="Neddylation"/>
</dbReference>
<dbReference type="Reactome" id="R-MMU-983168">
    <property type="pathway name" value="Antigen processing: Ubiquitination &amp; Proteasome degradation"/>
</dbReference>
<dbReference type="UniPathway" id="UPA00143"/>
<dbReference type="BioGRID-ORCS" id="83962">
    <property type="hits" value="1 hit in 78 CRISPR screens"/>
</dbReference>
<dbReference type="ChiTaRS" id="Btbd1">
    <property type="organism name" value="mouse"/>
</dbReference>
<dbReference type="PRO" id="PR:P58544"/>
<dbReference type="Proteomes" id="UP000000589">
    <property type="component" value="Chromosome 7"/>
</dbReference>
<dbReference type="RNAct" id="P58544">
    <property type="molecule type" value="protein"/>
</dbReference>
<dbReference type="Bgee" id="ENSMUSG00000025103">
    <property type="expression patterns" value="Expressed in spermatid and 68 other cell types or tissues"/>
</dbReference>
<dbReference type="GO" id="GO:0005829">
    <property type="term" value="C:cytosol"/>
    <property type="evidence" value="ECO:0007669"/>
    <property type="project" value="Ensembl"/>
</dbReference>
<dbReference type="GO" id="GO:0005654">
    <property type="term" value="C:nucleoplasm"/>
    <property type="evidence" value="ECO:0007669"/>
    <property type="project" value="Ensembl"/>
</dbReference>
<dbReference type="GO" id="GO:0000932">
    <property type="term" value="C:P-body"/>
    <property type="evidence" value="ECO:0000314"/>
    <property type="project" value="UniProtKB"/>
</dbReference>
<dbReference type="GO" id="GO:0032991">
    <property type="term" value="C:protein-containing complex"/>
    <property type="evidence" value="ECO:0007669"/>
    <property type="project" value="Ensembl"/>
</dbReference>
<dbReference type="GO" id="GO:0097602">
    <property type="term" value="F:cullin family protein binding"/>
    <property type="evidence" value="ECO:0007669"/>
    <property type="project" value="Ensembl"/>
</dbReference>
<dbReference type="GO" id="GO:0042802">
    <property type="term" value="F:identical protein binding"/>
    <property type="evidence" value="ECO:0007669"/>
    <property type="project" value="Ensembl"/>
</dbReference>
<dbReference type="GO" id="GO:0030154">
    <property type="term" value="P:cell differentiation"/>
    <property type="evidence" value="ECO:0007669"/>
    <property type="project" value="UniProtKB-KW"/>
</dbReference>
<dbReference type="GO" id="GO:0007517">
    <property type="term" value="P:muscle organ development"/>
    <property type="evidence" value="ECO:0007669"/>
    <property type="project" value="UniProtKB-KW"/>
</dbReference>
<dbReference type="GO" id="GO:0016567">
    <property type="term" value="P:protein ubiquitination"/>
    <property type="evidence" value="ECO:0007669"/>
    <property type="project" value="UniProtKB-UniPathway"/>
</dbReference>
<dbReference type="CDD" id="cd18346">
    <property type="entry name" value="BTB_POZ_BTBD1"/>
    <property type="match status" value="1"/>
</dbReference>
<dbReference type="FunFam" id="3.30.710.10:FF:000037">
    <property type="entry name" value="BTB (POZ) domain containing 1"/>
    <property type="match status" value="1"/>
</dbReference>
<dbReference type="FunFam" id="1.25.40.420:FF:000004">
    <property type="entry name" value="BTB/POZ domain-containing protein 2"/>
    <property type="match status" value="1"/>
</dbReference>
<dbReference type="FunFam" id="2.60.120.820:FF:000004">
    <property type="entry name" value="BTB/POZ domain-containing protein 2"/>
    <property type="match status" value="1"/>
</dbReference>
<dbReference type="Gene3D" id="1.25.40.420">
    <property type="match status" value="1"/>
</dbReference>
<dbReference type="Gene3D" id="2.60.120.820">
    <property type="entry name" value="PHR domain"/>
    <property type="match status" value="1"/>
</dbReference>
<dbReference type="Gene3D" id="3.30.710.10">
    <property type="entry name" value="Potassium Channel Kv1.1, Chain A"/>
    <property type="match status" value="1"/>
</dbReference>
<dbReference type="InterPro" id="IPR011705">
    <property type="entry name" value="BACK"/>
</dbReference>
<dbReference type="InterPro" id="IPR000210">
    <property type="entry name" value="BTB/POZ_dom"/>
</dbReference>
<dbReference type="InterPro" id="IPR012983">
    <property type="entry name" value="PHR"/>
</dbReference>
<dbReference type="InterPro" id="IPR038648">
    <property type="entry name" value="PHR_sf"/>
</dbReference>
<dbReference type="InterPro" id="IPR011333">
    <property type="entry name" value="SKP1/BTB/POZ_sf"/>
</dbReference>
<dbReference type="PANTHER" id="PTHR45774">
    <property type="entry name" value="BTB/POZ DOMAIN-CONTAINING"/>
    <property type="match status" value="1"/>
</dbReference>
<dbReference type="PANTHER" id="PTHR45774:SF1">
    <property type="entry name" value="BTB_POZ DOMAIN-CONTAINING PROTEIN 1"/>
    <property type="match status" value="1"/>
</dbReference>
<dbReference type="Pfam" id="PF07707">
    <property type="entry name" value="BACK"/>
    <property type="match status" value="1"/>
</dbReference>
<dbReference type="Pfam" id="PF00651">
    <property type="entry name" value="BTB"/>
    <property type="match status" value="1"/>
</dbReference>
<dbReference type="Pfam" id="PF08005">
    <property type="entry name" value="PHR"/>
    <property type="match status" value="1"/>
</dbReference>
<dbReference type="SMART" id="SM00875">
    <property type="entry name" value="BACK"/>
    <property type="match status" value="1"/>
</dbReference>
<dbReference type="SMART" id="SM00225">
    <property type="entry name" value="BTB"/>
    <property type="match status" value="1"/>
</dbReference>
<dbReference type="SUPFAM" id="SSF101447">
    <property type="entry name" value="Formin homology 2 domain (FH2 domain)"/>
    <property type="match status" value="1"/>
</dbReference>
<dbReference type="SUPFAM" id="SSF54695">
    <property type="entry name" value="POZ domain"/>
    <property type="match status" value="1"/>
</dbReference>
<dbReference type="PROSITE" id="PS50097">
    <property type="entry name" value="BTB"/>
    <property type="match status" value="1"/>
</dbReference>
<reference key="1">
    <citation type="journal article" date="2005" name="Science">
        <title>The transcriptional landscape of the mammalian genome.</title>
        <authorList>
            <person name="Carninci P."/>
            <person name="Kasukawa T."/>
            <person name="Katayama S."/>
            <person name="Gough J."/>
            <person name="Frith M.C."/>
            <person name="Maeda N."/>
            <person name="Oyama R."/>
            <person name="Ravasi T."/>
            <person name="Lenhard B."/>
            <person name="Wells C."/>
            <person name="Kodzius R."/>
            <person name="Shimokawa K."/>
            <person name="Bajic V.B."/>
            <person name="Brenner S.E."/>
            <person name="Batalov S."/>
            <person name="Forrest A.R."/>
            <person name="Zavolan M."/>
            <person name="Davis M.J."/>
            <person name="Wilming L.G."/>
            <person name="Aidinis V."/>
            <person name="Allen J.E."/>
            <person name="Ambesi-Impiombato A."/>
            <person name="Apweiler R."/>
            <person name="Aturaliya R.N."/>
            <person name="Bailey T.L."/>
            <person name="Bansal M."/>
            <person name="Baxter L."/>
            <person name="Beisel K.W."/>
            <person name="Bersano T."/>
            <person name="Bono H."/>
            <person name="Chalk A.M."/>
            <person name="Chiu K.P."/>
            <person name="Choudhary V."/>
            <person name="Christoffels A."/>
            <person name="Clutterbuck D.R."/>
            <person name="Crowe M.L."/>
            <person name="Dalla E."/>
            <person name="Dalrymple B.P."/>
            <person name="de Bono B."/>
            <person name="Della Gatta G."/>
            <person name="di Bernardo D."/>
            <person name="Down T."/>
            <person name="Engstrom P."/>
            <person name="Fagiolini M."/>
            <person name="Faulkner G."/>
            <person name="Fletcher C.F."/>
            <person name="Fukushima T."/>
            <person name="Furuno M."/>
            <person name="Futaki S."/>
            <person name="Gariboldi M."/>
            <person name="Georgii-Hemming P."/>
            <person name="Gingeras T.R."/>
            <person name="Gojobori T."/>
            <person name="Green R.E."/>
            <person name="Gustincich S."/>
            <person name="Harbers M."/>
            <person name="Hayashi Y."/>
            <person name="Hensch T.K."/>
            <person name="Hirokawa N."/>
            <person name="Hill D."/>
            <person name="Huminiecki L."/>
            <person name="Iacono M."/>
            <person name="Ikeo K."/>
            <person name="Iwama A."/>
            <person name="Ishikawa T."/>
            <person name="Jakt M."/>
            <person name="Kanapin A."/>
            <person name="Katoh M."/>
            <person name="Kawasawa Y."/>
            <person name="Kelso J."/>
            <person name="Kitamura H."/>
            <person name="Kitano H."/>
            <person name="Kollias G."/>
            <person name="Krishnan S.P."/>
            <person name="Kruger A."/>
            <person name="Kummerfeld S.K."/>
            <person name="Kurochkin I.V."/>
            <person name="Lareau L.F."/>
            <person name="Lazarevic D."/>
            <person name="Lipovich L."/>
            <person name="Liu J."/>
            <person name="Liuni S."/>
            <person name="McWilliam S."/>
            <person name="Madan Babu M."/>
            <person name="Madera M."/>
            <person name="Marchionni L."/>
            <person name="Matsuda H."/>
            <person name="Matsuzawa S."/>
            <person name="Miki H."/>
            <person name="Mignone F."/>
            <person name="Miyake S."/>
            <person name="Morris K."/>
            <person name="Mottagui-Tabar S."/>
            <person name="Mulder N."/>
            <person name="Nakano N."/>
            <person name="Nakauchi H."/>
            <person name="Ng P."/>
            <person name="Nilsson R."/>
            <person name="Nishiguchi S."/>
            <person name="Nishikawa S."/>
            <person name="Nori F."/>
            <person name="Ohara O."/>
            <person name="Okazaki Y."/>
            <person name="Orlando V."/>
            <person name="Pang K.C."/>
            <person name="Pavan W.J."/>
            <person name="Pavesi G."/>
            <person name="Pesole G."/>
            <person name="Petrovsky N."/>
            <person name="Piazza S."/>
            <person name="Reed J."/>
            <person name="Reid J.F."/>
            <person name="Ring B.Z."/>
            <person name="Ringwald M."/>
            <person name="Rost B."/>
            <person name="Ruan Y."/>
            <person name="Salzberg S.L."/>
            <person name="Sandelin A."/>
            <person name="Schneider C."/>
            <person name="Schoenbach C."/>
            <person name="Sekiguchi K."/>
            <person name="Semple C.A."/>
            <person name="Seno S."/>
            <person name="Sessa L."/>
            <person name="Sheng Y."/>
            <person name="Shibata Y."/>
            <person name="Shimada H."/>
            <person name="Shimada K."/>
            <person name="Silva D."/>
            <person name="Sinclair B."/>
            <person name="Sperling S."/>
            <person name="Stupka E."/>
            <person name="Sugiura K."/>
            <person name="Sultana R."/>
            <person name="Takenaka Y."/>
            <person name="Taki K."/>
            <person name="Tammoja K."/>
            <person name="Tan S.L."/>
            <person name="Tang S."/>
            <person name="Taylor M.S."/>
            <person name="Tegner J."/>
            <person name="Teichmann S.A."/>
            <person name="Ueda H.R."/>
            <person name="van Nimwegen E."/>
            <person name="Verardo R."/>
            <person name="Wei C.L."/>
            <person name="Yagi K."/>
            <person name="Yamanishi H."/>
            <person name="Zabarovsky E."/>
            <person name="Zhu S."/>
            <person name="Zimmer A."/>
            <person name="Hide W."/>
            <person name="Bult C."/>
            <person name="Grimmond S.M."/>
            <person name="Teasdale R.D."/>
            <person name="Liu E.T."/>
            <person name="Brusic V."/>
            <person name="Quackenbush J."/>
            <person name="Wahlestedt C."/>
            <person name="Mattick J.S."/>
            <person name="Hume D.A."/>
            <person name="Kai C."/>
            <person name="Sasaki D."/>
            <person name="Tomaru Y."/>
            <person name="Fukuda S."/>
            <person name="Kanamori-Katayama M."/>
            <person name="Suzuki M."/>
            <person name="Aoki J."/>
            <person name="Arakawa T."/>
            <person name="Iida J."/>
            <person name="Imamura K."/>
            <person name="Itoh M."/>
            <person name="Kato T."/>
            <person name="Kawaji H."/>
            <person name="Kawagashira N."/>
            <person name="Kawashima T."/>
            <person name="Kojima M."/>
            <person name="Kondo S."/>
            <person name="Konno H."/>
            <person name="Nakano K."/>
            <person name="Ninomiya N."/>
            <person name="Nishio T."/>
            <person name="Okada M."/>
            <person name="Plessy C."/>
            <person name="Shibata K."/>
            <person name="Shiraki T."/>
            <person name="Suzuki S."/>
            <person name="Tagami M."/>
            <person name="Waki K."/>
            <person name="Watahiki A."/>
            <person name="Okamura-Oho Y."/>
            <person name="Suzuki H."/>
            <person name="Kawai J."/>
            <person name="Hayashizaki Y."/>
        </authorList>
    </citation>
    <scope>NUCLEOTIDE SEQUENCE [LARGE SCALE MRNA] OF 1-391</scope>
    <source>
        <strain>NOD</strain>
        <tissue>Thymus</tissue>
    </source>
</reference>
<reference key="2">
    <citation type="journal article" date="2004" name="Genome Res.">
        <title>The status, quality, and expansion of the NIH full-length cDNA project: the Mammalian Gene Collection (MGC).</title>
        <authorList>
            <consortium name="The MGC Project Team"/>
        </authorList>
    </citation>
    <scope>NUCLEOTIDE SEQUENCE [LARGE SCALE MRNA]</scope>
    <source>
        <strain>C57BL/6J</strain>
        <strain>FVB/N</strain>
        <tissue>Brain</tissue>
        <tissue>Kidney</tissue>
    </source>
</reference>
<reference key="3">
    <citation type="journal article" date="2004" name="Cell Death Differ.">
        <title>The topoisomerase 1-interacting protein BTBD1 is essential for muscle cell differentiation.</title>
        <authorList>
            <person name="Pisani D.F."/>
            <person name="Cabane C."/>
            <person name="Derijard B."/>
            <person name="Dechesne C.A."/>
        </authorList>
    </citation>
    <scope>FUNCTION</scope>
    <scope>SUBCELLULAR LOCATION</scope>
    <scope>TISSUE SPECIFICITY</scope>
    <scope>MUTAGENESIS OF 1-MET--ALA-108</scope>
</reference>
<reference key="4">
    <citation type="journal article" date="2007" name="Exp. Cell Res.">
        <title>Involvement of BTBD1 in mesenchymal differentiation.</title>
        <authorList>
            <person name="Pisani D.F."/>
            <person name="Coldefy A.S."/>
            <person name="Elabd C."/>
            <person name="Cabane C."/>
            <person name="Salles J."/>
            <person name="Le Cunff M."/>
            <person name="Derijard B."/>
            <person name="Amri E.Z."/>
            <person name="Dani C."/>
            <person name="Leger J.J."/>
            <person name="Dechesne C.A."/>
        </authorList>
    </citation>
    <scope>FUNCTION</scope>
</reference>
<comment type="function">
    <text evidence="1 5 6">Probable substrate-specific adapter of an E3 ubiquitin-protein ligase complex which mediates the ubiquitination and subsequent proteasomal degradation of target proteins (By similarity). Seems to regulate expression levels and/or subnuclear distribution of TOP1, via an unknown mechanism (PubMed:15486563, PubMed:17462629). May play a role in mesenchymal differentiation where it promotes myogenic differentiation and suppresses adipogenesis (PubMed:15486563, PubMed:17462629).</text>
</comment>
<comment type="pathway">
    <text>Protein modification; protein ubiquitination.</text>
</comment>
<comment type="subunit">
    <text evidence="1">Interacts (via C-terminus) with TOP1. Interacts with TRIM5 isoform Delta. Interacts with CUL3.</text>
</comment>
<comment type="subcellular location">
    <subcellularLocation>
        <location evidence="5">Cytoplasm</location>
    </subcellularLocation>
    <text evidence="1">Localizes to punctate or elongated cytoplasmic bodies.</text>
</comment>
<comment type="tissue specificity">
    <text evidence="5">Strongly expressed in heart and skeletal muscle. Weakly expressed in myoblast C2C12 cells, but strongly up-regulated upon their differentiation into myotubes.</text>
</comment>
<comment type="sequence caution" evidence="7">
    <conflict type="erroneous initiation">
        <sequence resource="EMBL-CDS" id="AAH31192"/>
    </conflict>
    <text>Truncated N-terminus.</text>
</comment>
<evidence type="ECO:0000250" key="1">
    <source>
        <dbReference type="UniProtKB" id="Q9H0C5"/>
    </source>
</evidence>
<evidence type="ECO:0000255" key="2"/>
<evidence type="ECO:0000255" key="3">
    <source>
        <dbReference type="PROSITE-ProRule" id="PRU00037"/>
    </source>
</evidence>
<evidence type="ECO:0000256" key="4">
    <source>
        <dbReference type="SAM" id="MobiDB-lite"/>
    </source>
</evidence>
<evidence type="ECO:0000269" key="5">
    <source>
    </source>
</evidence>
<evidence type="ECO:0000269" key="6">
    <source>
    </source>
</evidence>
<evidence type="ECO:0000305" key="7"/>
<keyword id="KW-0963">Cytoplasm</keyword>
<keyword id="KW-0221">Differentiation</keyword>
<keyword id="KW-0488">Methylation</keyword>
<keyword id="KW-0517">Myogenesis</keyword>
<keyword id="KW-1185">Reference proteome</keyword>
<keyword id="KW-0833">Ubl conjugation pathway</keyword>
<name>BTBD1_MOUSE</name>